<gene>
    <name type="ordered locus">Os03g0766100</name>
    <name type="ordered locus">LOC_Os03g55730</name>
    <name type="ORF">OSJNBa0079B15</name>
</gene>
<dbReference type="EMBL" id="X15231">
    <property type="protein sequence ID" value="CAA33301.1"/>
    <property type="molecule type" value="mRNA"/>
</dbReference>
<dbReference type="EMBL" id="X17074">
    <property type="protein sequence ID" value="CAA34926.1"/>
    <property type="molecule type" value="Genomic_DNA"/>
</dbReference>
<dbReference type="EMBL" id="L36605">
    <property type="protein sequence ID" value="AAA50319.1"/>
    <property type="molecule type" value="Genomic_DNA"/>
</dbReference>
<dbReference type="EMBL" id="AF294580">
    <property type="protein sequence ID" value="AAK84296.1"/>
    <property type="molecule type" value="Genomic_DNA"/>
</dbReference>
<dbReference type="EMBL" id="EF122438">
    <property type="protein sequence ID" value="ABL74525.1"/>
    <property type="molecule type" value="mRNA"/>
</dbReference>
<dbReference type="EMBL" id="AC099043">
    <property type="status" value="NOT_ANNOTATED_CDS"/>
    <property type="molecule type" value="Genomic_DNA"/>
</dbReference>
<dbReference type="EMBL" id="AP008209">
    <property type="protein sequence ID" value="BAF13294.1"/>
    <property type="molecule type" value="Genomic_DNA"/>
</dbReference>
<dbReference type="EMBL" id="AP014959">
    <property type="protein sequence ID" value="BAS86554.1"/>
    <property type="molecule type" value="Genomic_DNA"/>
</dbReference>
<dbReference type="PIR" id="S08219">
    <property type="entry name" value="S08219"/>
</dbReference>
<dbReference type="SMR" id="Q0DN94"/>
<dbReference type="FunCoup" id="Q0DN94">
    <property type="interactions" value="3"/>
</dbReference>
<dbReference type="IntAct" id="Q0DN94">
    <property type="interactions" value="1"/>
</dbReference>
<dbReference type="STRING" id="39947.Q0DN94"/>
<dbReference type="PaxDb" id="39947-Q0DN94"/>
<dbReference type="EnsemblPlants" id="Os03t0766100-01">
    <property type="protein sequence ID" value="Os03t0766100-01"/>
    <property type="gene ID" value="Os03g0766100"/>
</dbReference>
<dbReference type="Gramene" id="Os03t0766100-01">
    <property type="protein sequence ID" value="Os03t0766100-01"/>
    <property type="gene ID" value="Os03g0766100"/>
</dbReference>
<dbReference type="KEGG" id="dosa:Os03g0766100"/>
<dbReference type="HOGENOM" id="CLU_132896_0_0_1"/>
<dbReference type="InParanoid" id="Q0DN94"/>
<dbReference type="OMA" id="CSNMAPG"/>
<dbReference type="Proteomes" id="UP000000763">
    <property type="component" value="Chromosome 3"/>
</dbReference>
<dbReference type="Proteomes" id="UP000059680">
    <property type="component" value="Chromosome 3"/>
</dbReference>
<dbReference type="GO" id="GO:0033095">
    <property type="term" value="C:aleurone grain"/>
    <property type="evidence" value="ECO:0007669"/>
    <property type="project" value="UniProtKB-SubCell"/>
</dbReference>
<dbReference type="GO" id="GO:0005773">
    <property type="term" value="C:vacuole"/>
    <property type="evidence" value="ECO:0007669"/>
    <property type="project" value="UniProtKB-KW"/>
</dbReference>
<dbReference type="GO" id="GO:0045735">
    <property type="term" value="F:nutrient reservoir activity"/>
    <property type="evidence" value="ECO:0007669"/>
    <property type="project" value="UniProtKB-KW"/>
</dbReference>
<dbReference type="Gene3D" id="1.10.110.10">
    <property type="entry name" value="Plant lipid-transfer and hydrophobic proteins"/>
    <property type="match status" value="1"/>
</dbReference>
<dbReference type="InterPro" id="IPR036312">
    <property type="entry name" value="Bifun_inhib/LTP/seed_sf"/>
</dbReference>
<dbReference type="InterPro" id="IPR016140">
    <property type="entry name" value="Bifunc_inhib/LTP/seed_store"/>
</dbReference>
<dbReference type="Pfam" id="PF00234">
    <property type="entry name" value="Tryp_alpha_amyl"/>
    <property type="match status" value="1"/>
</dbReference>
<dbReference type="SUPFAM" id="SSF47699">
    <property type="entry name" value="Bifunctional inhibitor/lipid-transfer protein/seed storage 2S albumin"/>
    <property type="match status" value="1"/>
</dbReference>
<name>PROA_ORYSJ</name>
<feature type="signal peptide">
    <location>
        <begin position="1"/>
        <end position="24"/>
    </location>
</feature>
<feature type="chain" id="PRO_0000032261" description="10 kDa prolamin">
    <location>
        <begin position="25"/>
        <end position="134"/>
    </location>
</feature>
<feature type="region of interest" description="Octapeptide unique to cereal prolamins">
    <location>
        <begin position="69"/>
        <end position="76"/>
    </location>
</feature>
<protein>
    <recommendedName>
        <fullName>10 kDa prolamin</fullName>
    </recommendedName>
</protein>
<accession>Q0DN94</accession>
<accession>A0A0P0W417</accession>
<accession>P15839</accession>
<accession>Q40729</accession>
<accession>Q53X24</accession>
<evidence type="ECO:0000305" key="1"/>
<comment type="function">
    <text>Seed storage protein; serves as a source of nitrogen, carbon and sulfur for the young developing seedling.</text>
</comment>
<comment type="subcellular location">
    <subcellularLocation>
        <location>Vacuole</location>
        <location>Aleurone grain</location>
    </subcellularLocation>
    <text>In rice, prolamin accumulates as a type I protein body which originates directly from the endoplasmic reticulum.</text>
</comment>
<comment type="similarity">
    <text evidence="1">Belongs to the prolamin family.</text>
</comment>
<organism>
    <name type="scientific">Oryza sativa subsp. japonica</name>
    <name type="common">Rice</name>
    <dbReference type="NCBI Taxonomy" id="39947"/>
    <lineage>
        <taxon>Eukaryota</taxon>
        <taxon>Viridiplantae</taxon>
        <taxon>Streptophyta</taxon>
        <taxon>Embryophyta</taxon>
        <taxon>Tracheophyta</taxon>
        <taxon>Spermatophyta</taxon>
        <taxon>Magnoliopsida</taxon>
        <taxon>Liliopsida</taxon>
        <taxon>Poales</taxon>
        <taxon>Poaceae</taxon>
        <taxon>BOP clade</taxon>
        <taxon>Oryzoideae</taxon>
        <taxon>Oryzeae</taxon>
        <taxon>Oryzinae</taxon>
        <taxon>Oryza</taxon>
        <taxon>Oryza sativa</taxon>
    </lineage>
</organism>
<keyword id="KW-1185">Reference proteome</keyword>
<keyword id="KW-0708">Seed storage protein</keyword>
<keyword id="KW-0732">Signal</keyword>
<keyword id="KW-0758">Storage protein</keyword>
<keyword id="KW-0926">Vacuole</keyword>
<sequence>MAAYTSKIFALFALIALSASATTAITTMQYFPPTLAMGTMDPCRQYMMQTLGMGSSTAMFMSQPMALLQQQCCMQLQGMMPQCHCGTSCQMMQSMQQVICAGLGQQQMMKMAMQMPYMCNMAPVNFQLSSCGCC</sequence>
<reference key="1">
    <citation type="journal article" date="1989" name="Plant Mol. Biol.">
        <title>cDNA cloning of an mRNA encording a sulfur-rich 10 kDa prolamin polypeptide in rice seeds.</title>
        <authorList>
            <person name="Masumura T."/>
            <person name="Shibata D."/>
            <person name="Hibino T."/>
            <person name="Kato T."/>
            <person name="Kawabe K."/>
            <person name="Takeba G."/>
            <person name="Tanaka K."/>
            <person name="Fujii S."/>
        </authorList>
    </citation>
    <scope>NUCLEOTIDE SEQUENCE [MRNA]</scope>
    <source>
        <strain>cv. Nipponbare</strain>
    </source>
</reference>
<reference key="2">
    <citation type="journal article" date="1990" name="Nucleic Acids Res.">
        <title>Nucleotide sequence of a cloned rice genomic DNA fragment that encodes a 10 kDa prolamin polypeptide.</title>
        <authorList>
            <person name="Feng G."/>
            <person name="Wen L."/>
            <person name="Huang J.K."/>
            <person name="Shorrosh B.S."/>
            <person name="Muthukrishnan S."/>
            <person name="Reeck G.R."/>
        </authorList>
    </citation>
    <scope>NUCLEOTIDE SEQUENCE [GENOMIC DNA]</scope>
    <source>
        <strain>cv. Newbonnet</strain>
    </source>
</reference>
<reference key="3">
    <citation type="submission" date="1994-10" db="EMBL/GenBank/DDBJ databases">
        <title>Cloning and sequence comparison of the gene encoding rice 10KD prolamin.</title>
        <authorList>
            <person name="You L."/>
            <person name="Xie M."/>
            <person name="Gu H."/>
            <person name="Qu L."/>
            <person name="Liang X."/>
            <person name="Chen Z."/>
        </authorList>
    </citation>
    <scope>NUCLEOTIDE SEQUENCE [GENOMIC DNA]</scope>
    <source>
        <strain>cv. Zhonghua 8</strain>
    </source>
</reference>
<reference key="4">
    <citation type="submission" date="2000-08" db="EMBL/GenBank/DDBJ databases">
        <title>10 kDa Rice prolamin genomic clone.</title>
        <authorList>
            <person name="Su P.-H."/>
            <person name="Chen C.-S."/>
        </authorList>
    </citation>
    <scope>NUCLEOTIDE SEQUENCE [GENOMIC DNA]</scope>
    <source>
        <strain>cv. Tainung 67</strain>
    </source>
</reference>
<reference key="5">
    <citation type="submission" date="2006-11" db="EMBL/GenBank/DDBJ databases">
        <title>Molecular cloning of 10kDa prolamin genes in rice seeds.</title>
        <authorList>
            <person name="Yoon U.H."/>
            <person name="Kim Y.H."/>
        </authorList>
    </citation>
    <scope>NUCLEOTIDE SEQUENCE [MRNA]</scope>
    <source>
        <strain>cv. Ilpoombyeo</strain>
    </source>
</reference>
<reference key="6">
    <citation type="journal article" date="2005" name="Genome Res.">
        <title>Sequence, annotation, and analysis of synteny between rice chromosome 3 and diverged grass species.</title>
        <authorList>
            <consortium name="The rice chromosome 3 sequencing consortium"/>
            <person name="Buell C.R."/>
            <person name="Yuan Q."/>
            <person name="Ouyang S."/>
            <person name="Liu J."/>
            <person name="Zhu W."/>
            <person name="Wang A."/>
            <person name="Maiti R."/>
            <person name="Haas B."/>
            <person name="Wortman J."/>
            <person name="Pertea M."/>
            <person name="Jones K.M."/>
            <person name="Kim M."/>
            <person name="Overton L."/>
            <person name="Tsitrin T."/>
            <person name="Fadrosh D."/>
            <person name="Bera J."/>
            <person name="Weaver B."/>
            <person name="Jin S."/>
            <person name="Johri S."/>
            <person name="Reardon M."/>
            <person name="Webb K."/>
            <person name="Hill J."/>
            <person name="Moffat K."/>
            <person name="Tallon L."/>
            <person name="Van Aken S."/>
            <person name="Lewis M."/>
            <person name="Utterback T."/>
            <person name="Feldblyum T."/>
            <person name="Zismann V."/>
            <person name="Iobst S."/>
            <person name="Hsiao J."/>
            <person name="de Vazeille A.R."/>
            <person name="Salzberg S.L."/>
            <person name="White O."/>
            <person name="Fraser C.M."/>
            <person name="Yu Y."/>
            <person name="Kim H."/>
            <person name="Rambo T."/>
            <person name="Currie J."/>
            <person name="Collura K."/>
            <person name="Kernodle-Thompson S."/>
            <person name="Wei F."/>
            <person name="Kudrna K."/>
            <person name="Ammiraju J.S.S."/>
            <person name="Luo M."/>
            <person name="Goicoechea J.L."/>
            <person name="Wing R.A."/>
            <person name="Henry D."/>
            <person name="Oates R."/>
            <person name="Palmer M."/>
            <person name="Pries G."/>
            <person name="Saski C."/>
            <person name="Simmons J."/>
            <person name="Soderlund C."/>
            <person name="Nelson W."/>
            <person name="de la Bastide M."/>
            <person name="Spiegel L."/>
            <person name="Nascimento L."/>
            <person name="Huang E."/>
            <person name="Preston R."/>
            <person name="Zutavern T."/>
            <person name="Palmer L."/>
            <person name="O'Shaughnessy A."/>
            <person name="Dike S."/>
            <person name="McCombie W.R."/>
            <person name="Minx P."/>
            <person name="Cordum H."/>
            <person name="Wilson R."/>
            <person name="Jin W."/>
            <person name="Lee H.R."/>
            <person name="Jiang J."/>
            <person name="Jackson S."/>
        </authorList>
    </citation>
    <scope>NUCLEOTIDE SEQUENCE [LARGE SCALE GENOMIC DNA]</scope>
    <source>
        <strain>cv. Nipponbare</strain>
    </source>
</reference>
<reference key="7">
    <citation type="journal article" date="2005" name="Nature">
        <title>The map-based sequence of the rice genome.</title>
        <authorList>
            <consortium name="International rice genome sequencing project (IRGSP)"/>
        </authorList>
    </citation>
    <scope>NUCLEOTIDE SEQUENCE [LARGE SCALE GENOMIC DNA]</scope>
    <source>
        <strain>cv. Nipponbare</strain>
    </source>
</reference>
<reference key="8">
    <citation type="journal article" date="2008" name="Nucleic Acids Res.">
        <title>The rice annotation project database (RAP-DB): 2008 update.</title>
        <authorList>
            <consortium name="The rice annotation project (RAP)"/>
        </authorList>
    </citation>
    <scope>GENOME REANNOTATION</scope>
    <source>
        <strain>cv. Nipponbare</strain>
    </source>
</reference>
<reference key="9">
    <citation type="journal article" date="2013" name="Rice">
        <title>Improvement of the Oryza sativa Nipponbare reference genome using next generation sequence and optical map data.</title>
        <authorList>
            <person name="Kawahara Y."/>
            <person name="de la Bastide M."/>
            <person name="Hamilton J.P."/>
            <person name="Kanamori H."/>
            <person name="McCombie W.R."/>
            <person name="Ouyang S."/>
            <person name="Schwartz D.C."/>
            <person name="Tanaka T."/>
            <person name="Wu J."/>
            <person name="Zhou S."/>
            <person name="Childs K.L."/>
            <person name="Davidson R.M."/>
            <person name="Lin H."/>
            <person name="Quesada-Ocampo L."/>
            <person name="Vaillancourt B."/>
            <person name="Sakai H."/>
            <person name="Lee S.S."/>
            <person name="Kim J."/>
            <person name="Numa H."/>
            <person name="Itoh T."/>
            <person name="Buell C.R."/>
            <person name="Matsumoto T."/>
        </authorList>
    </citation>
    <scope>GENOME REANNOTATION</scope>
    <source>
        <strain>cv. Nipponbare</strain>
    </source>
</reference>
<proteinExistence type="evidence at transcript level"/>